<feature type="chain" id="PRO_0000358431" description="NADH-quinone oxidoreductase subunit B">
    <location>
        <begin position="1"/>
        <end position="160"/>
    </location>
</feature>
<feature type="binding site" evidence="2">
    <location>
        <position position="37"/>
    </location>
    <ligand>
        <name>[4Fe-4S] cluster</name>
        <dbReference type="ChEBI" id="CHEBI:49883"/>
    </ligand>
</feature>
<feature type="binding site" evidence="2">
    <location>
        <position position="38"/>
    </location>
    <ligand>
        <name>[4Fe-4S] cluster</name>
        <dbReference type="ChEBI" id="CHEBI:49883"/>
    </ligand>
</feature>
<feature type="binding site" evidence="2">
    <location>
        <position position="102"/>
    </location>
    <ligand>
        <name>[4Fe-4S] cluster</name>
        <dbReference type="ChEBI" id="CHEBI:49883"/>
    </ligand>
</feature>
<feature type="binding site" evidence="2">
    <location>
        <position position="132"/>
    </location>
    <ligand>
        <name>[4Fe-4S] cluster</name>
        <dbReference type="ChEBI" id="CHEBI:49883"/>
    </ligand>
</feature>
<dbReference type="EC" id="7.1.1.-" evidence="2"/>
<dbReference type="EMBL" id="AM421808">
    <property type="protein sequence ID" value="CAM09552.1"/>
    <property type="molecule type" value="Genomic_DNA"/>
</dbReference>
<dbReference type="RefSeq" id="WP_002215610.1">
    <property type="nucleotide sequence ID" value="NC_008767.1"/>
</dbReference>
<dbReference type="SMR" id="A1KRS3"/>
<dbReference type="KEGG" id="nmc:NMC0238"/>
<dbReference type="HOGENOM" id="CLU_055737_7_3_4"/>
<dbReference type="Proteomes" id="UP000002286">
    <property type="component" value="Chromosome"/>
</dbReference>
<dbReference type="GO" id="GO:0005886">
    <property type="term" value="C:plasma membrane"/>
    <property type="evidence" value="ECO:0007669"/>
    <property type="project" value="UniProtKB-SubCell"/>
</dbReference>
<dbReference type="GO" id="GO:0045271">
    <property type="term" value="C:respiratory chain complex I"/>
    <property type="evidence" value="ECO:0007669"/>
    <property type="project" value="TreeGrafter"/>
</dbReference>
<dbReference type="GO" id="GO:0051539">
    <property type="term" value="F:4 iron, 4 sulfur cluster binding"/>
    <property type="evidence" value="ECO:0007669"/>
    <property type="project" value="UniProtKB-KW"/>
</dbReference>
<dbReference type="GO" id="GO:0005506">
    <property type="term" value="F:iron ion binding"/>
    <property type="evidence" value="ECO:0007669"/>
    <property type="project" value="UniProtKB-UniRule"/>
</dbReference>
<dbReference type="GO" id="GO:0008137">
    <property type="term" value="F:NADH dehydrogenase (ubiquinone) activity"/>
    <property type="evidence" value="ECO:0007669"/>
    <property type="project" value="InterPro"/>
</dbReference>
<dbReference type="GO" id="GO:0050136">
    <property type="term" value="F:NADH:ubiquinone reductase (non-electrogenic) activity"/>
    <property type="evidence" value="ECO:0007669"/>
    <property type="project" value="UniProtKB-UniRule"/>
</dbReference>
<dbReference type="GO" id="GO:0048038">
    <property type="term" value="F:quinone binding"/>
    <property type="evidence" value="ECO:0007669"/>
    <property type="project" value="UniProtKB-KW"/>
</dbReference>
<dbReference type="GO" id="GO:0009060">
    <property type="term" value="P:aerobic respiration"/>
    <property type="evidence" value="ECO:0007669"/>
    <property type="project" value="TreeGrafter"/>
</dbReference>
<dbReference type="GO" id="GO:0015990">
    <property type="term" value="P:electron transport coupled proton transport"/>
    <property type="evidence" value="ECO:0007669"/>
    <property type="project" value="TreeGrafter"/>
</dbReference>
<dbReference type="FunFam" id="3.40.50.12280:FF:000001">
    <property type="entry name" value="NADH-quinone oxidoreductase subunit B 2"/>
    <property type="match status" value="1"/>
</dbReference>
<dbReference type="Gene3D" id="3.40.50.12280">
    <property type="match status" value="1"/>
</dbReference>
<dbReference type="HAMAP" id="MF_01356">
    <property type="entry name" value="NDH1_NuoB"/>
    <property type="match status" value="1"/>
</dbReference>
<dbReference type="InterPro" id="IPR006137">
    <property type="entry name" value="NADH_UbQ_OxRdtase-like_20kDa"/>
</dbReference>
<dbReference type="InterPro" id="IPR006138">
    <property type="entry name" value="NADH_UQ_OxRdtase_20Kd_su"/>
</dbReference>
<dbReference type="NCBIfam" id="TIGR01957">
    <property type="entry name" value="nuoB_fam"/>
    <property type="match status" value="1"/>
</dbReference>
<dbReference type="NCBIfam" id="NF005012">
    <property type="entry name" value="PRK06411.1"/>
    <property type="match status" value="1"/>
</dbReference>
<dbReference type="PANTHER" id="PTHR11995">
    <property type="entry name" value="NADH DEHYDROGENASE"/>
    <property type="match status" value="1"/>
</dbReference>
<dbReference type="PANTHER" id="PTHR11995:SF14">
    <property type="entry name" value="NADH DEHYDROGENASE [UBIQUINONE] IRON-SULFUR PROTEIN 7, MITOCHONDRIAL"/>
    <property type="match status" value="1"/>
</dbReference>
<dbReference type="Pfam" id="PF01058">
    <property type="entry name" value="Oxidored_q6"/>
    <property type="match status" value="1"/>
</dbReference>
<dbReference type="SUPFAM" id="SSF56770">
    <property type="entry name" value="HydA/Nqo6-like"/>
    <property type="match status" value="1"/>
</dbReference>
<dbReference type="PROSITE" id="PS01150">
    <property type="entry name" value="COMPLEX1_20K"/>
    <property type="match status" value="1"/>
</dbReference>
<name>NUOB_NEIMF</name>
<proteinExistence type="inferred from homology"/>
<evidence type="ECO:0000250" key="1"/>
<evidence type="ECO:0000255" key="2">
    <source>
        <dbReference type="HAMAP-Rule" id="MF_01356"/>
    </source>
</evidence>
<comment type="function">
    <text evidence="1">NDH-1 shuttles electrons from NADH, via FMN and iron-sulfur (Fe-S) centers, to quinones in the respiratory chain. Couples the redox reaction to proton translocation (for every two electrons transferred, four hydrogen ions are translocated across the cytoplasmic membrane), and thus conserves the redox energy in a proton gradient (By similarity).</text>
</comment>
<comment type="catalytic activity">
    <reaction evidence="2">
        <text>a quinone + NADH + 5 H(+)(in) = a quinol + NAD(+) + 4 H(+)(out)</text>
        <dbReference type="Rhea" id="RHEA:57888"/>
        <dbReference type="ChEBI" id="CHEBI:15378"/>
        <dbReference type="ChEBI" id="CHEBI:24646"/>
        <dbReference type="ChEBI" id="CHEBI:57540"/>
        <dbReference type="ChEBI" id="CHEBI:57945"/>
        <dbReference type="ChEBI" id="CHEBI:132124"/>
    </reaction>
</comment>
<comment type="cofactor">
    <cofactor evidence="2">
        <name>[4Fe-4S] cluster</name>
        <dbReference type="ChEBI" id="CHEBI:49883"/>
    </cofactor>
    <text evidence="2">Binds 1 [4Fe-4S] cluster.</text>
</comment>
<comment type="subunit">
    <text evidence="2">NDH-1 is composed of 14 different subunits. Subunits NuoB, C, D, E, F, and G constitute the peripheral sector of the complex.</text>
</comment>
<comment type="subcellular location">
    <subcellularLocation>
        <location evidence="2">Cell inner membrane</location>
        <topology evidence="2">Peripheral membrane protein</topology>
        <orientation evidence="2">Cytoplasmic side</orientation>
    </subcellularLocation>
</comment>
<comment type="similarity">
    <text evidence="2">Belongs to the complex I 20 kDa subunit family.</text>
</comment>
<gene>
    <name evidence="2" type="primary">nuoB</name>
    <name type="ordered locus">NMC0238</name>
</gene>
<protein>
    <recommendedName>
        <fullName evidence="2">NADH-quinone oxidoreductase subunit B</fullName>
        <ecNumber evidence="2">7.1.1.-</ecNumber>
    </recommendedName>
    <alternativeName>
        <fullName evidence="2">NADH dehydrogenase I subunit B</fullName>
    </alternativeName>
    <alternativeName>
        <fullName evidence="2">NDH-1 subunit B</fullName>
    </alternativeName>
</protein>
<reference key="1">
    <citation type="journal article" date="2007" name="PLoS Genet.">
        <title>Meningococcal genetic variation mechanisms viewed through comparative analysis of serogroup C strain FAM18.</title>
        <authorList>
            <person name="Bentley S.D."/>
            <person name="Vernikos G.S."/>
            <person name="Snyder L.A.S."/>
            <person name="Churcher C."/>
            <person name="Arrowsmith C."/>
            <person name="Chillingworth T."/>
            <person name="Cronin A."/>
            <person name="Davis P.H."/>
            <person name="Holroyd N.E."/>
            <person name="Jagels K."/>
            <person name="Maddison M."/>
            <person name="Moule S."/>
            <person name="Rabbinowitsch E."/>
            <person name="Sharp S."/>
            <person name="Unwin L."/>
            <person name="Whitehead S."/>
            <person name="Quail M.A."/>
            <person name="Achtman M."/>
            <person name="Barrell B.G."/>
            <person name="Saunders N.J."/>
            <person name="Parkhill J."/>
        </authorList>
    </citation>
    <scope>NUCLEOTIDE SEQUENCE [LARGE SCALE GENOMIC DNA]</scope>
    <source>
        <strain>ATCC 700532 / DSM 15464 / FAM18</strain>
    </source>
</reference>
<sequence length="160" mass="17630">MGIEGVLKKGFITTSADTVLNYMRTGSLWPVTFGLACCAVEMMHAGMARYDLDRFGIIFRPSPRQADLMIVAGTLTNKMAPALRRVYDQLAEPRWVLSMGSCANGGGYYHYSYSVVRGADRVVPVDVYVPGCPPTAEALIYGLIQLQQKIKRTSTIARDE</sequence>
<organism>
    <name type="scientific">Neisseria meningitidis serogroup C / serotype 2a (strain ATCC 700532 / DSM 15464 / FAM18)</name>
    <dbReference type="NCBI Taxonomy" id="272831"/>
    <lineage>
        <taxon>Bacteria</taxon>
        <taxon>Pseudomonadati</taxon>
        <taxon>Pseudomonadota</taxon>
        <taxon>Betaproteobacteria</taxon>
        <taxon>Neisseriales</taxon>
        <taxon>Neisseriaceae</taxon>
        <taxon>Neisseria</taxon>
    </lineage>
</organism>
<accession>A1KRS3</accession>
<keyword id="KW-0004">4Fe-4S</keyword>
<keyword id="KW-0997">Cell inner membrane</keyword>
<keyword id="KW-1003">Cell membrane</keyword>
<keyword id="KW-0408">Iron</keyword>
<keyword id="KW-0411">Iron-sulfur</keyword>
<keyword id="KW-0472">Membrane</keyword>
<keyword id="KW-0479">Metal-binding</keyword>
<keyword id="KW-0520">NAD</keyword>
<keyword id="KW-0874">Quinone</keyword>
<keyword id="KW-1278">Translocase</keyword>
<keyword id="KW-0813">Transport</keyword>
<keyword id="KW-0830">Ubiquinone</keyword>